<protein>
    <recommendedName>
        <fullName>Protein disulfide-isomerase 5-4</fullName>
        <shortName>AtPDIL5-4</shortName>
    </recommendedName>
    <alternativeName>
        <fullName>Protein disulfide-isomerase 7</fullName>
        <shortName>PDI7</shortName>
    </alternativeName>
    <alternativeName>
        <fullName>Protein disulfide-isomerase 8-2</fullName>
        <shortName>AtPDIL8-2</shortName>
    </alternativeName>
</protein>
<proteinExistence type="evidence at transcript level"/>
<feature type="signal peptide">
    <location>
        <begin position="1"/>
        <end status="unknown"/>
    </location>
</feature>
<feature type="chain" id="PRO_0000400027" description="Protein disulfide-isomerase 5-4">
    <location>
        <begin status="unknown"/>
        <end position="480"/>
    </location>
</feature>
<feature type="transmembrane region" description="Helical" evidence="2">
    <location>
        <begin position="439"/>
        <end position="459"/>
    </location>
</feature>
<feature type="domain" description="Thioredoxin" evidence="3">
    <location>
        <begin position="120"/>
        <end position="263"/>
    </location>
</feature>
<feature type="active site" description="Nucleophile" evidence="1">
    <location>
        <position position="170"/>
    </location>
</feature>
<feature type="active site" description="Nucleophile" evidence="1">
    <location>
        <position position="173"/>
    </location>
</feature>
<feature type="site" description="Lowers pKa of C-terminal Cys of active site" evidence="1">
    <location>
        <position position="249"/>
    </location>
</feature>
<feature type="glycosylation site" description="N-linked (GlcNAc...) asparagine" evidence="2">
    <location>
        <position position="74"/>
    </location>
</feature>
<feature type="glycosylation site" description="N-linked (GlcNAc...) asparagine" evidence="2">
    <location>
        <position position="99"/>
    </location>
</feature>
<feature type="glycosylation site" description="N-linked (GlcNAc...) asparagine" evidence="2">
    <location>
        <position position="280"/>
    </location>
</feature>
<feature type="glycosylation site" description="N-linked (GlcNAc...) asparagine" evidence="2">
    <location>
        <position position="326"/>
    </location>
</feature>
<feature type="glycosylation site" description="N-linked (GlcNAc...) asparagine" evidence="2">
    <location>
        <position position="376"/>
    </location>
</feature>
<feature type="disulfide bond" description="Redox-active" evidence="3">
    <location>
        <begin position="170"/>
        <end position="173"/>
    </location>
</feature>
<feature type="sequence conflict" description="In Ref. 4; AAM67352." evidence="5" ref="4">
    <original>V</original>
    <variation>A</variation>
    <location>
        <position position="453"/>
    </location>
</feature>
<sequence length="480" mass="53893">MVSTSKIKSVDFYRKIPRDLTEASLSGAGLSIIAALSMIFLFGMELNNYLAVSTSTSVIVDRSADGDFLRLDFNISFPSLSCEFASVDVSDVLGTNRLNVTKTIRKFSIDSNMRPTGSEFHAGEVLSLINHGDETGEEIVEDSVPLTGRNFDTFTHQFPILVVNFYAPWCYWCNLLKPSWEKAAKQIKERYDPEMDGRVILAKVDCTQEGDLCRRNHIQGYPSIRIFRKGSDLKDDNAHHDHESYYGDRDTESLVKMVVSLVEPIHLEPHNLALEDKSDNSSRTLKKAPSTGGCRVEGYMRVKKVPGNLMVSARSGSHSFDSSQMNMSHVVNHLSFGRRIMPQKFSEFKRLSPYLGLSHDRLDGRSFINQRDLGPNVTIEHYLQIVKTEVVKSNGQALVEAYEYTAHSSVAHSYYLPVAKFHFELSPMQVLITENSKSFSHFITNVCAIIGGVFTVAGILDSILHHSMTLMKKIELGKNF</sequence>
<organism>
    <name type="scientific">Arabidopsis thaliana</name>
    <name type="common">Mouse-ear cress</name>
    <dbReference type="NCBI Taxonomy" id="3702"/>
    <lineage>
        <taxon>Eukaryota</taxon>
        <taxon>Viridiplantae</taxon>
        <taxon>Streptophyta</taxon>
        <taxon>Embryophyta</taxon>
        <taxon>Tracheophyta</taxon>
        <taxon>Spermatophyta</taxon>
        <taxon>Magnoliopsida</taxon>
        <taxon>eudicotyledons</taxon>
        <taxon>Gunneridae</taxon>
        <taxon>Pentapetalae</taxon>
        <taxon>rosids</taxon>
        <taxon>malvids</taxon>
        <taxon>Brassicales</taxon>
        <taxon>Brassicaceae</taxon>
        <taxon>Camelineae</taxon>
        <taxon>Arabidopsis</taxon>
    </lineage>
</organism>
<comment type="function">
    <text evidence="1">Acts as a protein-folding catalyst that interacts with nascent polypeptides to catalyze the formation, isomerization, and reduction or oxidation of disulfide bonds.</text>
</comment>
<comment type="subcellular location">
    <subcellularLocation>
        <location evidence="5">Membrane</location>
        <topology evidence="5">Single-pass membrane protein</topology>
    </subcellularLocation>
</comment>
<comment type="alternative products">
    <event type="alternative splicing"/>
    <isoform>
        <id>Q9T042-1</id>
        <name>1</name>
        <sequence type="displayed"/>
    </isoform>
    <text>A number of isoforms are produced. According to EST sequences.</text>
</comment>
<comment type="tissue specificity">
    <text evidence="4">Widely expressed.</text>
</comment>
<comment type="induction">
    <text evidence="4">Slightly down-regulated by chemically-induced ER stress response.</text>
</comment>
<comment type="similarity">
    <text evidence="5">Belongs to the protein disulfide isomerase family.</text>
</comment>
<dbReference type="EMBL" id="AL035680">
    <property type="protein sequence ID" value="CAB38838.1"/>
    <property type="molecule type" value="Genomic_DNA"/>
</dbReference>
<dbReference type="EMBL" id="AL161566">
    <property type="protein sequence ID" value="CAB79563.1"/>
    <property type="molecule type" value="Genomic_DNA"/>
</dbReference>
<dbReference type="EMBL" id="CP002687">
    <property type="protein sequence ID" value="AEE85297.1"/>
    <property type="molecule type" value="Genomic_DNA"/>
</dbReference>
<dbReference type="EMBL" id="AY054496">
    <property type="protein sequence ID" value="AAK96687.1"/>
    <property type="molecule type" value="mRNA"/>
</dbReference>
<dbReference type="EMBL" id="AY093266">
    <property type="protein sequence ID" value="AAM13265.1"/>
    <property type="molecule type" value="mRNA"/>
</dbReference>
<dbReference type="EMBL" id="AY084612">
    <property type="protein sequence ID" value="AAM67352.1"/>
    <property type="molecule type" value="mRNA"/>
</dbReference>
<dbReference type="PIR" id="T06038">
    <property type="entry name" value="T06038"/>
</dbReference>
<dbReference type="RefSeq" id="NP_567765.2">
    <molecule id="Q9T042-1"/>
    <property type="nucleotide sequence ID" value="NM_118842.4"/>
</dbReference>
<dbReference type="BioGRID" id="14103">
    <property type="interactions" value="1"/>
</dbReference>
<dbReference type="FunCoup" id="Q9T042">
    <property type="interactions" value="1545"/>
</dbReference>
<dbReference type="STRING" id="3702.Q9T042"/>
<dbReference type="GlyCosmos" id="Q9T042">
    <property type="glycosylation" value="5 sites, No reported glycans"/>
</dbReference>
<dbReference type="GlyGen" id="Q9T042">
    <property type="glycosylation" value="5 sites"/>
</dbReference>
<dbReference type="PaxDb" id="3702-AT4G27080.2"/>
<dbReference type="ProteomicsDB" id="236336">
    <molecule id="Q9T042-1"/>
</dbReference>
<dbReference type="EnsemblPlants" id="AT4G27080.1">
    <molecule id="Q9T042-1"/>
    <property type="protein sequence ID" value="AT4G27080.1"/>
    <property type="gene ID" value="AT4G27080"/>
</dbReference>
<dbReference type="GeneID" id="828816"/>
<dbReference type="Gramene" id="AT4G27080.1">
    <molecule id="Q9T042-1"/>
    <property type="protein sequence ID" value="AT4G27080.1"/>
    <property type="gene ID" value="AT4G27080"/>
</dbReference>
<dbReference type="KEGG" id="ath:AT4G27080"/>
<dbReference type="Araport" id="AT4G27080"/>
<dbReference type="TAIR" id="AT4G27080">
    <property type="gene designation" value="PDIL5-4"/>
</dbReference>
<dbReference type="eggNOG" id="KOG2667">
    <property type="taxonomic scope" value="Eukaryota"/>
</dbReference>
<dbReference type="HOGENOM" id="CLU_034705_3_0_1"/>
<dbReference type="InParanoid" id="Q9T042"/>
<dbReference type="OMA" id="GNFHVHL"/>
<dbReference type="OrthoDB" id="72053at2759"/>
<dbReference type="PhylomeDB" id="Q9T042"/>
<dbReference type="PRO" id="PR:Q9T042"/>
<dbReference type="Proteomes" id="UP000006548">
    <property type="component" value="Chromosome 4"/>
</dbReference>
<dbReference type="ExpressionAtlas" id="Q9T042">
    <property type="expression patterns" value="baseline and differential"/>
</dbReference>
<dbReference type="GO" id="GO:0016020">
    <property type="term" value="C:membrane"/>
    <property type="evidence" value="ECO:0007669"/>
    <property type="project" value="UniProtKB-SubCell"/>
</dbReference>
<dbReference type="GO" id="GO:0046907">
    <property type="term" value="P:intracellular transport"/>
    <property type="evidence" value="ECO:0007669"/>
    <property type="project" value="UniProtKB-ARBA"/>
</dbReference>
<dbReference type="CDD" id="cd02961">
    <property type="entry name" value="PDI_a_family"/>
    <property type="match status" value="1"/>
</dbReference>
<dbReference type="FunFam" id="3.40.30.10:FF:000174">
    <property type="entry name" value="Protein disulfide-isomerase 5-4"/>
    <property type="match status" value="1"/>
</dbReference>
<dbReference type="Gene3D" id="3.40.30.10">
    <property type="entry name" value="Glutaredoxin"/>
    <property type="match status" value="1"/>
</dbReference>
<dbReference type="InterPro" id="IPR045888">
    <property type="entry name" value="Erv"/>
</dbReference>
<dbReference type="InterPro" id="IPR012936">
    <property type="entry name" value="Erv_C"/>
</dbReference>
<dbReference type="InterPro" id="IPR039542">
    <property type="entry name" value="Erv_N"/>
</dbReference>
<dbReference type="InterPro" id="IPR036249">
    <property type="entry name" value="Thioredoxin-like_sf"/>
</dbReference>
<dbReference type="InterPro" id="IPR013766">
    <property type="entry name" value="Thioredoxin_domain"/>
</dbReference>
<dbReference type="PANTHER" id="PTHR10984">
    <property type="entry name" value="ENDOPLASMIC RETICULUM-GOLGI INTERMEDIATE COMPARTMENT PROTEIN"/>
    <property type="match status" value="1"/>
</dbReference>
<dbReference type="PANTHER" id="PTHR10984:SF76">
    <property type="entry name" value="PROTEIN DISULFIDE-ISOMERASE 5-4"/>
    <property type="match status" value="1"/>
</dbReference>
<dbReference type="Pfam" id="PF07970">
    <property type="entry name" value="COPIIcoated_ERV"/>
    <property type="match status" value="1"/>
</dbReference>
<dbReference type="Pfam" id="PF13850">
    <property type="entry name" value="ERGIC_N"/>
    <property type="match status" value="1"/>
</dbReference>
<dbReference type="Pfam" id="PF00085">
    <property type="entry name" value="Thioredoxin"/>
    <property type="match status" value="1"/>
</dbReference>
<dbReference type="SUPFAM" id="SSF52833">
    <property type="entry name" value="Thioredoxin-like"/>
    <property type="match status" value="1"/>
</dbReference>
<dbReference type="PROSITE" id="PS51352">
    <property type="entry name" value="THIOREDOXIN_2"/>
    <property type="match status" value="1"/>
</dbReference>
<name>PDI54_ARATH</name>
<evidence type="ECO:0000250" key="1"/>
<evidence type="ECO:0000255" key="2"/>
<evidence type="ECO:0000255" key="3">
    <source>
        <dbReference type="PROSITE-ProRule" id="PRU00691"/>
    </source>
</evidence>
<evidence type="ECO:0000269" key="4">
    <source>
    </source>
</evidence>
<evidence type="ECO:0000305" key="5"/>
<keyword id="KW-0025">Alternative splicing</keyword>
<keyword id="KW-1015">Disulfide bond</keyword>
<keyword id="KW-0325">Glycoprotein</keyword>
<keyword id="KW-0472">Membrane</keyword>
<keyword id="KW-0676">Redox-active center</keyword>
<keyword id="KW-1185">Reference proteome</keyword>
<keyword id="KW-0732">Signal</keyword>
<keyword id="KW-0812">Transmembrane</keyword>
<keyword id="KW-1133">Transmembrane helix</keyword>
<gene>
    <name type="primary">PDIL5-4</name>
    <name type="synonym">PDI7</name>
    <name type="synonym">PDIL8-2</name>
    <name type="ordered locus">At4g27080</name>
    <name type="ORF">T24A18.30</name>
</gene>
<accession>Q9T042</accession>
<accession>Q8LFW3</accession>
<reference key="1">
    <citation type="journal article" date="1999" name="Nature">
        <title>Sequence and analysis of chromosome 4 of the plant Arabidopsis thaliana.</title>
        <authorList>
            <person name="Mayer K.F.X."/>
            <person name="Schueller C."/>
            <person name="Wambutt R."/>
            <person name="Murphy G."/>
            <person name="Volckaert G."/>
            <person name="Pohl T."/>
            <person name="Duesterhoeft A."/>
            <person name="Stiekema W."/>
            <person name="Entian K.-D."/>
            <person name="Terryn N."/>
            <person name="Harris B."/>
            <person name="Ansorge W."/>
            <person name="Brandt P."/>
            <person name="Grivell L.A."/>
            <person name="Rieger M."/>
            <person name="Weichselgartner M."/>
            <person name="de Simone V."/>
            <person name="Obermaier B."/>
            <person name="Mache R."/>
            <person name="Mueller M."/>
            <person name="Kreis M."/>
            <person name="Delseny M."/>
            <person name="Puigdomenech P."/>
            <person name="Watson M."/>
            <person name="Schmidtheini T."/>
            <person name="Reichert B."/>
            <person name="Portetelle D."/>
            <person name="Perez-Alonso M."/>
            <person name="Boutry M."/>
            <person name="Bancroft I."/>
            <person name="Vos P."/>
            <person name="Hoheisel J."/>
            <person name="Zimmermann W."/>
            <person name="Wedler H."/>
            <person name="Ridley P."/>
            <person name="Langham S.-A."/>
            <person name="McCullagh B."/>
            <person name="Bilham L."/>
            <person name="Robben J."/>
            <person name="van der Schueren J."/>
            <person name="Grymonprez B."/>
            <person name="Chuang Y.-J."/>
            <person name="Vandenbussche F."/>
            <person name="Braeken M."/>
            <person name="Weltjens I."/>
            <person name="Voet M."/>
            <person name="Bastiaens I."/>
            <person name="Aert R."/>
            <person name="Defoor E."/>
            <person name="Weitzenegger T."/>
            <person name="Bothe G."/>
            <person name="Ramsperger U."/>
            <person name="Hilbert H."/>
            <person name="Braun M."/>
            <person name="Holzer E."/>
            <person name="Brandt A."/>
            <person name="Peters S."/>
            <person name="van Staveren M."/>
            <person name="Dirkse W."/>
            <person name="Mooijman P."/>
            <person name="Klein Lankhorst R."/>
            <person name="Rose M."/>
            <person name="Hauf J."/>
            <person name="Koetter P."/>
            <person name="Berneiser S."/>
            <person name="Hempel S."/>
            <person name="Feldpausch M."/>
            <person name="Lamberth S."/>
            <person name="Van den Daele H."/>
            <person name="De Keyser A."/>
            <person name="Buysshaert C."/>
            <person name="Gielen J."/>
            <person name="Villarroel R."/>
            <person name="De Clercq R."/>
            <person name="van Montagu M."/>
            <person name="Rogers J."/>
            <person name="Cronin A."/>
            <person name="Quail M.A."/>
            <person name="Bray-Allen S."/>
            <person name="Clark L."/>
            <person name="Doggett J."/>
            <person name="Hall S."/>
            <person name="Kay M."/>
            <person name="Lennard N."/>
            <person name="McLay K."/>
            <person name="Mayes R."/>
            <person name="Pettett A."/>
            <person name="Rajandream M.A."/>
            <person name="Lyne M."/>
            <person name="Benes V."/>
            <person name="Rechmann S."/>
            <person name="Borkova D."/>
            <person name="Bloecker H."/>
            <person name="Scharfe M."/>
            <person name="Grimm M."/>
            <person name="Loehnert T.-H."/>
            <person name="Dose S."/>
            <person name="de Haan M."/>
            <person name="Maarse A.C."/>
            <person name="Schaefer M."/>
            <person name="Mueller-Auer S."/>
            <person name="Gabel C."/>
            <person name="Fuchs M."/>
            <person name="Fartmann B."/>
            <person name="Granderath K."/>
            <person name="Dauner D."/>
            <person name="Herzl A."/>
            <person name="Neumann S."/>
            <person name="Argiriou A."/>
            <person name="Vitale D."/>
            <person name="Liguori R."/>
            <person name="Piravandi E."/>
            <person name="Massenet O."/>
            <person name="Quigley F."/>
            <person name="Clabauld G."/>
            <person name="Muendlein A."/>
            <person name="Felber R."/>
            <person name="Schnabl S."/>
            <person name="Hiller R."/>
            <person name="Schmidt W."/>
            <person name="Lecharny A."/>
            <person name="Aubourg S."/>
            <person name="Chefdor F."/>
            <person name="Cooke R."/>
            <person name="Berger C."/>
            <person name="Monfort A."/>
            <person name="Casacuberta E."/>
            <person name="Gibbons T."/>
            <person name="Weber N."/>
            <person name="Vandenbol M."/>
            <person name="Bargues M."/>
            <person name="Terol J."/>
            <person name="Torres A."/>
            <person name="Perez-Perez A."/>
            <person name="Purnelle B."/>
            <person name="Bent E."/>
            <person name="Johnson S."/>
            <person name="Tacon D."/>
            <person name="Jesse T."/>
            <person name="Heijnen L."/>
            <person name="Schwarz S."/>
            <person name="Scholler P."/>
            <person name="Heber S."/>
            <person name="Francs P."/>
            <person name="Bielke C."/>
            <person name="Frishman D."/>
            <person name="Haase D."/>
            <person name="Lemcke K."/>
            <person name="Mewes H.-W."/>
            <person name="Stocker S."/>
            <person name="Zaccaria P."/>
            <person name="Bevan M."/>
            <person name="Wilson R.K."/>
            <person name="de la Bastide M."/>
            <person name="Habermann K."/>
            <person name="Parnell L."/>
            <person name="Dedhia N."/>
            <person name="Gnoj L."/>
            <person name="Schutz K."/>
            <person name="Huang E."/>
            <person name="Spiegel L."/>
            <person name="Sekhon M."/>
            <person name="Murray J."/>
            <person name="Sheet P."/>
            <person name="Cordes M."/>
            <person name="Abu-Threideh J."/>
            <person name="Stoneking T."/>
            <person name="Kalicki J."/>
            <person name="Graves T."/>
            <person name="Harmon G."/>
            <person name="Edwards J."/>
            <person name="Latreille P."/>
            <person name="Courtney L."/>
            <person name="Cloud J."/>
            <person name="Abbott A."/>
            <person name="Scott K."/>
            <person name="Johnson D."/>
            <person name="Minx P."/>
            <person name="Bentley D."/>
            <person name="Fulton B."/>
            <person name="Miller N."/>
            <person name="Greco T."/>
            <person name="Kemp K."/>
            <person name="Kramer J."/>
            <person name="Fulton L."/>
            <person name="Mardis E."/>
            <person name="Dante M."/>
            <person name="Pepin K."/>
            <person name="Hillier L.W."/>
            <person name="Nelson J."/>
            <person name="Spieth J."/>
            <person name="Ryan E."/>
            <person name="Andrews S."/>
            <person name="Geisel C."/>
            <person name="Layman D."/>
            <person name="Du H."/>
            <person name="Ali J."/>
            <person name="Berghoff A."/>
            <person name="Jones K."/>
            <person name="Drone K."/>
            <person name="Cotton M."/>
            <person name="Joshu C."/>
            <person name="Antonoiu B."/>
            <person name="Zidanic M."/>
            <person name="Strong C."/>
            <person name="Sun H."/>
            <person name="Lamar B."/>
            <person name="Yordan C."/>
            <person name="Ma P."/>
            <person name="Zhong J."/>
            <person name="Preston R."/>
            <person name="Vil D."/>
            <person name="Shekher M."/>
            <person name="Matero A."/>
            <person name="Shah R."/>
            <person name="Swaby I.K."/>
            <person name="O'Shaughnessy A."/>
            <person name="Rodriguez M."/>
            <person name="Hoffman J."/>
            <person name="Till S."/>
            <person name="Granat S."/>
            <person name="Shohdy N."/>
            <person name="Hasegawa A."/>
            <person name="Hameed A."/>
            <person name="Lodhi M."/>
            <person name="Johnson A."/>
            <person name="Chen E."/>
            <person name="Marra M.A."/>
            <person name="Martienssen R."/>
            <person name="McCombie W.R."/>
        </authorList>
    </citation>
    <scope>NUCLEOTIDE SEQUENCE [LARGE SCALE GENOMIC DNA]</scope>
    <source>
        <strain>cv. Columbia</strain>
    </source>
</reference>
<reference key="2">
    <citation type="journal article" date="2017" name="Plant J.">
        <title>Araport11: a complete reannotation of the Arabidopsis thaliana reference genome.</title>
        <authorList>
            <person name="Cheng C.Y."/>
            <person name="Krishnakumar V."/>
            <person name="Chan A.P."/>
            <person name="Thibaud-Nissen F."/>
            <person name="Schobel S."/>
            <person name="Town C.D."/>
        </authorList>
    </citation>
    <scope>GENOME REANNOTATION</scope>
    <source>
        <strain>cv. Columbia</strain>
    </source>
</reference>
<reference key="3">
    <citation type="journal article" date="2003" name="Science">
        <title>Empirical analysis of transcriptional activity in the Arabidopsis genome.</title>
        <authorList>
            <person name="Yamada K."/>
            <person name="Lim J."/>
            <person name="Dale J.M."/>
            <person name="Chen H."/>
            <person name="Shinn P."/>
            <person name="Palm C.J."/>
            <person name="Southwick A.M."/>
            <person name="Wu H.C."/>
            <person name="Kim C.J."/>
            <person name="Nguyen M."/>
            <person name="Pham P.K."/>
            <person name="Cheuk R.F."/>
            <person name="Karlin-Newmann G."/>
            <person name="Liu S.X."/>
            <person name="Lam B."/>
            <person name="Sakano H."/>
            <person name="Wu T."/>
            <person name="Yu G."/>
            <person name="Miranda M."/>
            <person name="Quach H.L."/>
            <person name="Tripp M."/>
            <person name="Chang C.H."/>
            <person name="Lee J.M."/>
            <person name="Toriumi M.J."/>
            <person name="Chan M.M."/>
            <person name="Tang C.C."/>
            <person name="Onodera C.S."/>
            <person name="Deng J.M."/>
            <person name="Akiyama K."/>
            <person name="Ansari Y."/>
            <person name="Arakawa T."/>
            <person name="Banh J."/>
            <person name="Banno F."/>
            <person name="Bowser L."/>
            <person name="Brooks S.Y."/>
            <person name="Carninci P."/>
            <person name="Chao Q."/>
            <person name="Choy N."/>
            <person name="Enju A."/>
            <person name="Goldsmith A.D."/>
            <person name="Gurjal M."/>
            <person name="Hansen N.F."/>
            <person name="Hayashizaki Y."/>
            <person name="Johnson-Hopson C."/>
            <person name="Hsuan V.W."/>
            <person name="Iida K."/>
            <person name="Karnes M."/>
            <person name="Khan S."/>
            <person name="Koesema E."/>
            <person name="Ishida J."/>
            <person name="Jiang P.X."/>
            <person name="Jones T."/>
            <person name="Kawai J."/>
            <person name="Kamiya A."/>
            <person name="Meyers C."/>
            <person name="Nakajima M."/>
            <person name="Narusaka M."/>
            <person name="Seki M."/>
            <person name="Sakurai T."/>
            <person name="Satou M."/>
            <person name="Tamse R."/>
            <person name="Vaysberg M."/>
            <person name="Wallender E.K."/>
            <person name="Wong C."/>
            <person name="Yamamura Y."/>
            <person name="Yuan S."/>
            <person name="Shinozaki K."/>
            <person name="Davis R.W."/>
            <person name="Theologis A."/>
            <person name="Ecker J.R."/>
        </authorList>
    </citation>
    <scope>NUCLEOTIDE SEQUENCE [LARGE SCALE MRNA]</scope>
    <source>
        <strain>cv. Columbia</strain>
    </source>
</reference>
<reference key="4">
    <citation type="submission" date="2002-03" db="EMBL/GenBank/DDBJ databases">
        <title>Full-length cDNA from Arabidopsis thaliana.</title>
        <authorList>
            <person name="Brover V.V."/>
            <person name="Troukhan M.E."/>
            <person name="Alexandrov N.A."/>
            <person name="Lu Y.-P."/>
            <person name="Flavell R.B."/>
            <person name="Feldmann K.A."/>
        </authorList>
    </citation>
    <scope>NUCLEOTIDE SEQUENCE [LARGE SCALE MRNA] OF 164-480</scope>
</reference>
<reference key="5">
    <citation type="journal article" date="2005" name="Plant Physiol.">
        <title>Phylogenetic analyses identify 10 classes of the protein disulfide isomerase family in plants, including single-domain protein disulfide isomerase-related proteins.</title>
        <authorList>
            <person name="Houston N.L."/>
            <person name="Fan C."/>
            <person name="Xiang J.Q."/>
            <person name="Schulze J.M."/>
            <person name="Jung R."/>
            <person name="Boston R.S."/>
        </authorList>
    </citation>
    <scope>GENE FAMILY</scope>
    <scope>NOMENCLATURE</scope>
</reference>
<reference key="6">
    <citation type="journal article" date="2008" name="Mol. Genet. Genomics">
        <title>Endoplasmic reticulum stress activates the expression of a sub-group of protein disulfide isomerase genes and AtbZIP60 modulates the response in Arabidopsis thaliana.</title>
        <authorList>
            <person name="Lu D.-P."/>
            <person name="Christopher D.A."/>
        </authorList>
    </citation>
    <scope>TISSUE SPECIFICITY</scope>
    <scope>INDUCTION</scope>
</reference>
<reference key="7">
    <citation type="journal article" date="2010" name="BMC Plant Biol.">
        <title>The protein disulfide isomerase gene family in bread wheat (T. aestivum L.).</title>
        <authorList>
            <person name="d'Aloisio E."/>
            <person name="Paolacci A.R."/>
            <person name="Dhanapal A.P."/>
            <person name="Tanzarella O.A."/>
            <person name="Porceddu E."/>
            <person name="Ciaffi M."/>
        </authorList>
    </citation>
    <scope>GENE FAMILY</scope>
    <scope>NOMENCLATURE</scope>
</reference>